<dbReference type="EMBL" id="AF398972">
    <property type="protein sequence ID" value="AAK97494.1"/>
    <property type="molecule type" value="mRNA"/>
</dbReference>
<dbReference type="EMBL" id="AK002412">
    <property type="protein sequence ID" value="BAB22080.1"/>
    <property type="molecule type" value="mRNA"/>
</dbReference>
<dbReference type="EMBL" id="AK004396">
    <property type="protein sequence ID" value="BAB23286.1"/>
    <property type="molecule type" value="mRNA"/>
</dbReference>
<dbReference type="EMBL" id="AK005404">
    <property type="protein sequence ID" value="BAB24004.1"/>
    <property type="molecule type" value="mRNA"/>
</dbReference>
<dbReference type="EMBL" id="AK146664">
    <property type="protein sequence ID" value="BAE27342.1"/>
    <property type="molecule type" value="mRNA"/>
</dbReference>
<dbReference type="EMBL" id="AL732475">
    <property type="status" value="NOT_ANNOTATED_CDS"/>
    <property type="molecule type" value="Genomic_DNA"/>
</dbReference>
<dbReference type="EMBL" id="BC064047">
    <property type="protein sequence ID" value="AAH64047.1"/>
    <property type="molecule type" value="mRNA"/>
</dbReference>
<dbReference type="CCDS" id="CCDS30523.1">
    <molecule id="Q9CQ31-2"/>
</dbReference>
<dbReference type="CCDS" id="CCDS85827.1">
    <molecule id="Q9CQ31-1"/>
</dbReference>
<dbReference type="RefSeq" id="NP_001300666.1">
    <molecule id="Q9CQ31-1"/>
    <property type="nucleotide sequence ID" value="NM_001313737.1"/>
</dbReference>
<dbReference type="RefSeq" id="NP_081129.1">
    <molecule id="Q9CQ31-2"/>
    <property type="nucleotide sequence ID" value="NM_026853.2"/>
</dbReference>
<dbReference type="RefSeq" id="XP_036017979.1">
    <molecule id="Q9CQ31-2"/>
    <property type="nucleotide sequence ID" value="XM_036162086.1"/>
</dbReference>
<dbReference type="SMR" id="Q9CQ31"/>
<dbReference type="BioGRID" id="213086">
    <property type="interactions" value="1"/>
</dbReference>
<dbReference type="FunCoup" id="Q9CQ31">
    <property type="interactions" value="209"/>
</dbReference>
<dbReference type="STRING" id="10090.ENSMUSP00000044637"/>
<dbReference type="iPTMnet" id="Q9CQ31"/>
<dbReference type="PhosphoSitePlus" id="Q9CQ31"/>
<dbReference type="PaxDb" id="10090-ENSMUSP00000033755"/>
<dbReference type="ProteomicsDB" id="265113">
    <molecule id="Q9CQ31-1"/>
</dbReference>
<dbReference type="ProteomicsDB" id="265114">
    <molecule id="Q9CQ31-2"/>
</dbReference>
<dbReference type="Antibodypedia" id="353">
    <property type="antibodies" value="110 antibodies from 20 providers"/>
</dbReference>
<dbReference type="DNASU" id="68854"/>
<dbReference type="Ensembl" id="ENSMUST00000033755.6">
    <molecule id="Q9CQ31-2"/>
    <property type="protein sequence ID" value="ENSMUSP00000033755.6"/>
    <property type="gene ID" value="ENSMUSG00000031382.15"/>
</dbReference>
<dbReference type="Ensembl" id="ENSMUST00000036858.11">
    <molecule id="Q9CQ31-1"/>
    <property type="protein sequence ID" value="ENSMUSP00000044637.5"/>
    <property type="gene ID" value="ENSMUSG00000031382.15"/>
</dbReference>
<dbReference type="GeneID" id="68854"/>
<dbReference type="KEGG" id="mmu:68854"/>
<dbReference type="UCSC" id="uc009uvq.1">
    <molecule id="Q9CQ31-1"/>
    <property type="organism name" value="mouse"/>
</dbReference>
<dbReference type="UCSC" id="uc009uvr.1">
    <molecule id="Q9CQ31-2"/>
    <property type="organism name" value="mouse"/>
</dbReference>
<dbReference type="AGR" id="MGI:1916104"/>
<dbReference type="CTD" id="140456"/>
<dbReference type="MGI" id="MGI:1916104">
    <property type="gene designation" value="Asb11"/>
</dbReference>
<dbReference type="VEuPathDB" id="HostDB:ENSMUSG00000031382"/>
<dbReference type="eggNOG" id="KOG0504">
    <property type="taxonomic scope" value="Eukaryota"/>
</dbReference>
<dbReference type="GeneTree" id="ENSGT00940000160592"/>
<dbReference type="HOGENOM" id="CLU_000134_4_1_1"/>
<dbReference type="InParanoid" id="Q9CQ31"/>
<dbReference type="OMA" id="GRACHQV"/>
<dbReference type="OrthoDB" id="3246549at2759"/>
<dbReference type="PhylomeDB" id="Q9CQ31"/>
<dbReference type="TreeFam" id="TF331945"/>
<dbReference type="Reactome" id="R-MMU-8951664">
    <property type="pathway name" value="Neddylation"/>
</dbReference>
<dbReference type="Reactome" id="R-MMU-983168">
    <property type="pathway name" value="Antigen processing: Ubiquitination &amp; Proteasome degradation"/>
</dbReference>
<dbReference type="UniPathway" id="UPA00143"/>
<dbReference type="BioGRID-ORCS" id="68854">
    <property type="hits" value="0 hits in 62 CRISPR screens"/>
</dbReference>
<dbReference type="PRO" id="PR:Q9CQ31"/>
<dbReference type="Proteomes" id="UP000000589">
    <property type="component" value="Chromosome X"/>
</dbReference>
<dbReference type="RNAct" id="Q9CQ31">
    <property type="molecule type" value="protein"/>
</dbReference>
<dbReference type="Bgee" id="ENSMUSG00000031382">
    <property type="expression patterns" value="Expressed in interventricular septum and 75 other cell types or tissues"/>
</dbReference>
<dbReference type="GO" id="GO:0031466">
    <property type="term" value="C:Cul5-RING ubiquitin ligase complex"/>
    <property type="evidence" value="ECO:0000250"/>
    <property type="project" value="UniProtKB"/>
</dbReference>
<dbReference type="GO" id="GO:0005783">
    <property type="term" value="C:endoplasmic reticulum"/>
    <property type="evidence" value="ECO:0000250"/>
    <property type="project" value="UniProtKB"/>
</dbReference>
<dbReference type="GO" id="GO:1990756">
    <property type="term" value="F:ubiquitin-like ligase-substrate adaptor activity"/>
    <property type="evidence" value="ECO:0000250"/>
    <property type="project" value="UniProtKB"/>
</dbReference>
<dbReference type="GO" id="GO:0030968">
    <property type="term" value="P:endoplasmic reticulum unfolded protein response"/>
    <property type="evidence" value="ECO:0000250"/>
    <property type="project" value="UniProtKB"/>
</dbReference>
<dbReference type="GO" id="GO:0043161">
    <property type="term" value="P:proteasome-mediated ubiquitin-dependent protein catabolic process"/>
    <property type="evidence" value="ECO:0000250"/>
    <property type="project" value="UniProtKB"/>
</dbReference>
<dbReference type="GO" id="GO:0070979">
    <property type="term" value="P:protein K11-linked ubiquitination"/>
    <property type="evidence" value="ECO:0000250"/>
    <property type="project" value="UniProtKB"/>
</dbReference>
<dbReference type="GO" id="GO:0016567">
    <property type="term" value="P:protein ubiquitination"/>
    <property type="evidence" value="ECO:0000250"/>
    <property type="project" value="UniProtKB"/>
</dbReference>
<dbReference type="FunFam" id="1.10.750.20:FF:000001">
    <property type="entry name" value="Ankyrin repeat and SOCS box containing 1"/>
    <property type="match status" value="1"/>
</dbReference>
<dbReference type="FunFam" id="1.25.40.20:FF:000016">
    <property type="entry name" value="Ankyrin repeat and SOCS box containing 5"/>
    <property type="match status" value="1"/>
</dbReference>
<dbReference type="Gene3D" id="1.25.40.20">
    <property type="entry name" value="Ankyrin repeat-containing domain"/>
    <property type="match status" value="1"/>
</dbReference>
<dbReference type="Gene3D" id="1.10.750.20">
    <property type="entry name" value="SOCS box"/>
    <property type="match status" value="1"/>
</dbReference>
<dbReference type="InterPro" id="IPR051573">
    <property type="entry name" value="Ankyrin-SOCS_box_domain"/>
</dbReference>
<dbReference type="InterPro" id="IPR002110">
    <property type="entry name" value="Ankyrin_rpt"/>
</dbReference>
<dbReference type="InterPro" id="IPR036770">
    <property type="entry name" value="Ankyrin_rpt-contain_sf"/>
</dbReference>
<dbReference type="InterPro" id="IPR001496">
    <property type="entry name" value="SOCS_box"/>
</dbReference>
<dbReference type="InterPro" id="IPR036036">
    <property type="entry name" value="SOCS_box-like_dom_sf"/>
</dbReference>
<dbReference type="PANTHER" id="PTHR24136:SF14">
    <property type="entry name" value="ANKYRIN REPEAT AND SOCS BOX PROTEIN 11"/>
    <property type="match status" value="1"/>
</dbReference>
<dbReference type="PANTHER" id="PTHR24136">
    <property type="entry name" value="SOWAH (DROSOPHILA) HOMOLOG"/>
    <property type="match status" value="1"/>
</dbReference>
<dbReference type="Pfam" id="PF00023">
    <property type="entry name" value="Ank"/>
    <property type="match status" value="1"/>
</dbReference>
<dbReference type="Pfam" id="PF12796">
    <property type="entry name" value="Ank_2"/>
    <property type="match status" value="2"/>
</dbReference>
<dbReference type="Pfam" id="PF07525">
    <property type="entry name" value="SOCS_box"/>
    <property type="match status" value="1"/>
</dbReference>
<dbReference type="SMART" id="SM00248">
    <property type="entry name" value="ANK"/>
    <property type="match status" value="6"/>
</dbReference>
<dbReference type="SMART" id="SM00969">
    <property type="entry name" value="SOCS_box"/>
    <property type="match status" value="1"/>
</dbReference>
<dbReference type="SUPFAM" id="SSF48403">
    <property type="entry name" value="Ankyrin repeat"/>
    <property type="match status" value="1"/>
</dbReference>
<dbReference type="SUPFAM" id="SSF158235">
    <property type="entry name" value="SOCS box-like"/>
    <property type="match status" value="1"/>
</dbReference>
<dbReference type="PROSITE" id="PS50297">
    <property type="entry name" value="ANK_REP_REGION"/>
    <property type="match status" value="1"/>
</dbReference>
<dbReference type="PROSITE" id="PS50088">
    <property type="entry name" value="ANK_REPEAT"/>
    <property type="match status" value="4"/>
</dbReference>
<dbReference type="PROSITE" id="PS50225">
    <property type="entry name" value="SOCS"/>
    <property type="match status" value="1"/>
</dbReference>
<reference key="1">
    <citation type="journal article" date="2001" name="Mol. Cell. Biol.">
        <title>Functional analysis of Asb-1 using genetic modification in mice.</title>
        <authorList>
            <person name="Kile B.T."/>
            <person name="Metcalf D."/>
            <person name="Mifsud S."/>
            <person name="DiRago L."/>
            <person name="Nicola N.A."/>
            <person name="Hilton D.J."/>
            <person name="Alexander W.S."/>
        </authorList>
    </citation>
    <scope>NUCLEOTIDE SEQUENCE [MRNA] (ISOFORM 1)</scope>
</reference>
<reference key="2">
    <citation type="journal article" date="2005" name="Science">
        <title>The transcriptional landscape of the mammalian genome.</title>
        <authorList>
            <person name="Carninci P."/>
            <person name="Kasukawa T."/>
            <person name="Katayama S."/>
            <person name="Gough J."/>
            <person name="Frith M.C."/>
            <person name="Maeda N."/>
            <person name="Oyama R."/>
            <person name="Ravasi T."/>
            <person name="Lenhard B."/>
            <person name="Wells C."/>
            <person name="Kodzius R."/>
            <person name="Shimokawa K."/>
            <person name="Bajic V.B."/>
            <person name="Brenner S.E."/>
            <person name="Batalov S."/>
            <person name="Forrest A.R."/>
            <person name="Zavolan M."/>
            <person name="Davis M.J."/>
            <person name="Wilming L.G."/>
            <person name="Aidinis V."/>
            <person name="Allen J.E."/>
            <person name="Ambesi-Impiombato A."/>
            <person name="Apweiler R."/>
            <person name="Aturaliya R.N."/>
            <person name="Bailey T.L."/>
            <person name="Bansal M."/>
            <person name="Baxter L."/>
            <person name="Beisel K.W."/>
            <person name="Bersano T."/>
            <person name="Bono H."/>
            <person name="Chalk A.M."/>
            <person name="Chiu K.P."/>
            <person name="Choudhary V."/>
            <person name="Christoffels A."/>
            <person name="Clutterbuck D.R."/>
            <person name="Crowe M.L."/>
            <person name="Dalla E."/>
            <person name="Dalrymple B.P."/>
            <person name="de Bono B."/>
            <person name="Della Gatta G."/>
            <person name="di Bernardo D."/>
            <person name="Down T."/>
            <person name="Engstrom P."/>
            <person name="Fagiolini M."/>
            <person name="Faulkner G."/>
            <person name="Fletcher C.F."/>
            <person name="Fukushima T."/>
            <person name="Furuno M."/>
            <person name="Futaki S."/>
            <person name="Gariboldi M."/>
            <person name="Georgii-Hemming P."/>
            <person name="Gingeras T.R."/>
            <person name="Gojobori T."/>
            <person name="Green R.E."/>
            <person name="Gustincich S."/>
            <person name="Harbers M."/>
            <person name="Hayashi Y."/>
            <person name="Hensch T.K."/>
            <person name="Hirokawa N."/>
            <person name="Hill D."/>
            <person name="Huminiecki L."/>
            <person name="Iacono M."/>
            <person name="Ikeo K."/>
            <person name="Iwama A."/>
            <person name="Ishikawa T."/>
            <person name="Jakt M."/>
            <person name="Kanapin A."/>
            <person name="Katoh M."/>
            <person name="Kawasawa Y."/>
            <person name="Kelso J."/>
            <person name="Kitamura H."/>
            <person name="Kitano H."/>
            <person name="Kollias G."/>
            <person name="Krishnan S.P."/>
            <person name="Kruger A."/>
            <person name="Kummerfeld S.K."/>
            <person name="Kurochkin I.V."/>
            <person name="Lareau L.F."/>
            <person name="Lazarevic D."/>
            <person name="Lipovich L."/>
            <person name="Liu J."/>
            <person name="Liuni S."/>
            <person name="McWilliam S."/>
            <person name="Madan Babu M."/>
            <person name="Madera M."/>
            <person name="Marchionni L."/>
            <person name="Matsuda H."/>
            <person name="Matsuzawa S."/>
            <person name="Miki H."/>
            <person name="Mignone F."/>
            <person name="Miyake S."/>
            <person name="Morris K."/>
            <person name="Mottagui-Tabar S."/>
            <person name="Mulder N."/>
            <person name="Nakano N."/>
            <person name="Nakauchi H."/>
            <person name="Ng P."/>
            <person name="Nilsson R."/>
            <person name="Nishiguchi S."/>
            <person name="Nishikawa S."/>
            <person name="Nori F."/>
            <person name="Ohara O."/>
            <person name="Okazaki Y."/>
            <person name="Orlando V."/>
            <person name="Pang K.C."/>
            <person name="Pavan W.J."/>
            <person name="Pavesi G."/>
            <person name="Pesole G."/>
            <person name="Petrovsky N."/>
            <person name="Piazza S."/>
            <person name="Reed J."/>
            <person name="Reid J.F."/>
            <person name="Ring B.Z."/>
            <person name="Ringwald M."/>
            <person name="Rost B."/>
            <person name="Ruan Y."/>
            <person name="Salzberg S.L."/>
            <person name="Sandelin A."/>
            <person name="Schneider C."/>
            <person name="Schoenbach C."/>
            <person name="Sekiguchi K."/>
            <person name="Semple C.A."/>
            <person name="Seno S."/>
            <person name="Sessa L."/>
            <person name="Sheng Y."/>
            <person name="Shibata Y."/>
            <person name="Shimada H."/>
            <person name="Shimada K."/>
            <person name="Silva D."/>
            <person name="Sinclair B."/>
            <person name="Sperling S."/>
            <person name="Stupka E."/>
            <person name="Sugiura K."/>
            <person name="Sultana R."/>
            <person name="Takenaka Y."/>
            <person name="Taki K."/>
            <person name="Tammoja K."/>
            <person name="Tan S.L."/>
            <person name="Tang S."/>
            <person name="Taylor M.S."/>
            <person name="Tegner J."/>
            <person name="Teichmann S.A."/>
            <person name="Ueda H.R."/>
            <person name="van Nimwegen E."/>
            <person name="Verardo R."/>
            <person name="Wei C.L."/>
            <person name="Yagi K."/>
            <person name="Yamanishi H."/>
            <person name="Zabarovsky E."/>
            <person name="Zhu S."/>
            <person name="Zimmer A."/>
            <person name="Hide W."/>
            <person name="Bult C."/>
            <person name="Grimmond S.M."/>
            <person name="Teasdale R.D."/>
            <person name="Liu E.T."/>
            <person name="Brusic V."/>
            <person name="Quackenbush J."/>
            <person name="Wahlestedt C."/>
            <person name="Mattick J.S."/>
            <person name="Hume D.A."/>
            <person name="Kai C."/>
            <person name="Sasaki D."/>
            <person name="Tomaru Y."/>
            <person name="Fukuda S."/>
            <person name="Kanamori-Katayama M."/>
            <person name="Suzuki M."/>
            <person name="Aoki J."/>
            <person name="Arakawa T."/>
            <person name="Iida J."/>
            <person name="Imamura K."/>
            <person name="Itoh M."/>
            <person name="Kato T."/>
            <person name="Kawaji H."/>
            <person name="Kawagashira N."/>
            <person name="Kawashima T."/>
            <person name="Kojima M."/>
            <person name="Kondo S."/>
            <person name="Konno H."/>
            <person name="Nakano K."/>
            <person name="Ninomiya N."/>
            <person name="Nishio T."/>
            <person name="Okada M."/>
            <person name="Plessy C."/>
            <person name="Shibata K."/>
            <person name="Shiraki T."/>
            <person name="Suzuki S."/>
            <person name="Tagami M."/>
            <person name="Waki K."/>
            <person name="Watahiki A."/>
            <person name="Okamura-Oho Y."/>
            <person name="Suzuki H."/>
            <person name="Kawai J."/>
            <person name="Hayashizaki Y."/>
        </authorList>
    </citation>
    <scope>NUCLEOTIDE SEQUENCE [LARGE SCALE MRNA] (ISOFORM 1)</scope>
    <source>
        <strain>C57BL/6J</strain>
        <tissue>Amnion</tissue>
        <tissue>Kidney</tissue>
        <tissue>Placenta</tissue>
    </source>
</reference>
<reference key="3">
    <citation type="journal article" date="2009" name="PLoS Biol.">
        <title>Lineage-specific biology revealed by a finished genome assembly of the mouse.</title>
        <authorList>
            <person name="Church D.M."/>
            <person name="Goodstadt L."/>
            <person name="Hillier L.W."/>
            <person name="Zody M.C."/>
            <person name="Goldstein S."/>
            <person name="She X."/>
            <person name="Bult C.J."/>
            <person name="Agarwala R."/>
            <person name="Cherry J.L."/>
            <person name="DiCuccio M."/>
            <person name="Hlavina W."/>
            <person name="Kapustin Y."/>
            <person name="Meric P."/>
            <person name="Maglott D."/>
            <person name="Birtle Z."/>
            <person name="Marques A.C."/>
            <person name="Graves T."/>
            <person name="Zhou S."/>
            <person name="Teague B."/>
            <person name="Potamousis K."/>
            <person name="Churas C."/>
            <person name="Place M."/>
            <person name="Herschleb J."/>
            <person name="Runnheim R."/>
            <person name="Forrest D."/>
            <person name="Amos-Landgraf J."/>
            <person name="Schwartz D.C."/>
            <person name="Cheng Z."/>
            <person name="Lindblad-Toh K."/>
            <person name="Eichler E.E."/>
            <person name="Ponting C.P."/>
        </authorList>
    </citation>
    <scope>NUCLEOTIDE SEQUENCE [LARGE SCALE GENOMIC DNA]</scope>
    <source>
        <strain>C57BL/6J</strain>
    </source>
</reference>
<reference key="4">
    <citation type="journal article" date="2004" name="Genome Res.">
        <title>The status, quality, and expansion of the NIH full-length cDNA project: the Mammalian Gene Collection (MGC).</title>
        <authorList>
            <consortium name="The MGC Project Team"/>
        </authorList>
    </citation>
    <scope>NUCLEOTIDE SEQUENCE [LARGE SCALE MRNA] (ISOFORM 2)</scope>
    <source>
        <strain>C57BL/6J</strain>
        <tissue>Mammary gland</tissue>
    </source>
</reference>
<gene>
    <name type="primary">Asb11</name>
</gene>
<evidence type="ECO:0000250" key="1">
    <source>
        <dbReference type="UniProtKB" id="Q8WXH4"/>
    </source>
</evidence>
<evidence type="ECO:0000255" key="2">
    <source>
        <dbReference type="PROSITE-ProRule" id="PRU00194"/>
    </source>
</evidence>
<evidence type="ECO:0000303" key="3">
    <source>
    </source>
</evidence>
<evidence type="ECO:0000305" key="4"/>
<proteinExistence type="evidence at transcript level"/>
<keyword id="KW-0025">Alternative splicing</keyword>
<keyword id="KW-0040">ANK repeat</keyword>
<keyword id="KW-0256">Endoplasmic reticulum</keyword>
<keyword id="KW-1185">Reference proteome</keyword>
<keyword id="KW-0677">Repeat</keyword>
<keyword id="KW-0833">Ubl conjugation pathway</keyword>
<feature type="chain" id="PRO_0000066945" description="Ankyrin repeat and SOCS box protein 11">
    <location>
        <begin position="1"/>
        <end position="323"/>
    </location>
</feature>
<feature type="repeat" description="ANK 1">
    <location>
        <begin position="64"/>
        <end position="93"/>
    </location>
</feature>
<feature type="repeat" description="ANK 2">
    <location>
        <begin position="97"/>
        <end position="126"/>
    </location>
</feature>
<feature type="repeat" description="ANK 3">
    <location>
        <begin position="130"/>
        <end position="159"/>
    </location>
</feature>
<feature type="repeat" description="ANK 4">
    <location>
        <begin position="162"/>
        <end position="191"/>
    </location>
</feature>
<feature type="repeat" description="ANK 5">
    <location>
        <begin position="195"/>
        <end position="224"/>
    </location>
</feature>
<feature type="repeat" description="ANK 6">
    <location>
        <begin position="227"/>
        <end position="256"/>
    </location>
</feature>
<feature type="repeat" description="ANK 7">
    <location>
        <begin position="260"/>
        <end position="289"/>
    </location>
</feature>
<feature type="domain" description="SOCS box" evidence="2">
    <location>
        <begin position="273"/>
        <end position="323"/>
    </location>
</feature>
<feature type="splice variant" id="VSP_013946" description="In isoform 2." evidence="3">
    <original>MEDAPAFYGFKNIFLTMFATFFFFKLLIKVFLALLTHFYIVKGNRKEAARIAEEIYGGLS</original>
    <variation>MLQLAGEEGVRRPGPWKEISFGDYICHTFQG</variation>
    <location>
        <begin position="1"/>
        <end position="60"/>
    </location>
</feature>
<comment type="function">
    <text evidence="1">Substrate-recognition component of a cullin-5-RING E3 ubiquitin-protein ligase complex (ECS complex, also named CRL5 complex), which mediates the ubiquitination and subsequent proteasomal degradation of target proteins, such as BIK, DIRAS2 and RPN1. The ECS(ASB11) complex acts as a regulator of the endoplasmic reticulum unfolded protein response by mediating ubiquitination and degradation of BIK.</text>
</comment>
<comment type="pathway">
    <text evidence="1">Protein modification; protein ubiquitination.</text>
</comment>
<comment type="subunit">
    <text evidence="1">Substrate-recognition component of the ECS(ASB11) complex, composed of ASB11, CUL5, ELOB, ELOC and RNF7/RBX2.</text>
</comment>
<comment type="subcellular location">
    <subcellularLocation>
        <location evidence="1">Endoplasmic reticulum</location>
    </subcellularLocation>
</comment>
<comment type="alternative products">
    <event type="alternative splicing"/>
    <isoform>
        <id>Q9CQ31-1</id>
        <name>1</name>
        <sequence type="displayed"/>
    </isoform>
    <isoform>
        <id>Q9CQ31-2</id>
        <name>2</name>
        <sequence type="described" ref="VSP_013946"/>
    </isoform>
</comment>
<comment type="similarity">
    <text evidence="4">Belongs to the ankyrin SOCS box (ASB) family.</text>
</comment>
<organism>
    <name type="scientific">Mus musculus</name>
    <name type="common">Mouse</name>
    <dbReference type="NCBI Taxonomy" id="10090"/>
    <lineage>
        <taxon>Eukaryota</taxon>
        <taxon>Metazoa</taxon>
        <taxon>Chordata</taxon>
        <taxon>Craniata</taxon>
        <taxon>Vertebrata</taxon>
        <taxon>Euteleostomi</taxon>
        <taxon>Mammalia</taxon>
        <taxon>Eutheria</taxon>
        <taxon>Euarchontoglires</taxon>
        <taxon>Glires</taxon>
        <taxon>Rodentia</taxon>
        <taxon>Myomorpha</taxon>
        <taxon>Muroidea</taxon>
        <taxon>Muridae</taxon>
        <taxon>Murinae</taxon>
        <taxon>Mus</taxon>
        <taxon>Mus</taxon>
    </lineage>
</organism>
<sequence>MEDAPAFYGFKNIFLTMFATFFFFKLLIKVFLALLTHFYIVKGNRKEAARIAEEIYGGLSDCWADRSPLHEAAAQGRLLALKTLIAQGINVNLVTINRVSSLHEACLGGHVACAKALLENGAHVNAQTVHGATPLFNACCSGSAACVNVLLEFGAKAQLEIYLASPIHEAVKRGHRECMEILLTKDVNIEQEVPQLGTPLYVACTYQRVDCVKKLLELGASVDHGQWLDTPLHAAVRQSSVEVINLLTVYGANLNLRNAQGKSALDLAVPKSSVRQALLLHEGPPALSQLCRLCVRKCLGRTCHHAIYALGLPESLEKFLLYQ</sequence>
<protein>
    <recommendedName>
        <fullName>Ankyrin repeat and SOCS box protein 11</fullName>
        <shortName>ASB-11</shortName>
    </recommendedName>
</protein>
<name>ASB11_MOUSE</name>
<accession>Q9CQ31</accession>
<accession>A2AIH7</accession>
<accession>Q3UJ13</accession>
<accession>Q9D0V1</accession>